<keyword id="KW-0496">Mitochondrion</keyword>
<dbReference type="EMBL" id="FN393078">
    <property type="protein sequence ID" value="CAY81327.1"/>
    <property type="molecule type" value="Genomic_DNA"/>
</dbReference>
<dbReference type="HOGENOM" id="CLU_079415_0_0_1"/>
<dbReference type="OrthoDB" id="37949at4893"/>
<dbReference type="Proteomes" id="UP000000286">
    <property type="component" value="Chromosome XII, Scaffold EC1118_1L10"/>
</dbReference>
<dbReference type="GO" id="GO:0005739">
    <property type="term" value="C:mitochondrion"/>
    <property type="evidence" value="ECO:0007669"/>
    <property type="project" value="UniProtKB-SubCell"/>
</dbReference>
<dbReference type="GO" id="GO:0000002">
    <property type="term" value="P:mitochondrial genome maintenance"/>
    <property type="evidence" value="ECO:0007669"/>
    <property type="project" value="InterPro"/>
</dbReference>
<dbReference type="InterPro" id="IPR031455">
    <property type="entry name" value="Gep5"/>
</dbReference>
<dbReference type="Pfam" id="PF17053">
    <property type="entry name" value="GEP5"/>
    <property type="match status" value="1"/>
</dbReference>
<feature type="chain" id="PRO_0000399691" description="Genetic interactor of prohibitin 5, mitochondrial">
    <location>
        <begin position="1"/>
        <end position="293"/>
    </location>
</feature>
<comment type="function">
    <text evidence="1">Essential for respiratory growth and required for maintenance of mtDNA. Required for cell survival in the absence of prohibitins (By similarity).</text>
</comment>
<comment type="subcellular location">
    <subcellularLocation>
        <location evidence="1">Mitochondrion</location>
    </subcellularLocation>
</comment>
<comment type="similarity">
    <text evidence="2">Belongs to the GEP5 family.</text>
</comment>
<name>GEP5_YEAS8</name>
<accession>C8ZD61</accession>
<evidence type="ECO:0000250" key="1"/>
<evidence type="ECO:0000305" key="2"/>
<sequence>MASQVNALLLPVIESTPLHQITKVALTTTLTSKQSDYKFKEIAVPLTKSLQLYEKAQRRQDLRASLKALESIIYQTHFQWNNPLPRHAHLFQKHYHFLLTHWPFENHRDLVDSIAVNNGKLNSTSSRSVWLKADWITLFNVKNPWVQTPPSLMRLSGTDLDTFTPERIFLINSLGNHYKFLIANSHLSYNHKKYPSPGVQIPIRNALGEVSPAKQIAQLFARQLSHIYKSLFIENPPLSPENELALTAVFYDETVERRLRRLYMRACARAYTTTNADSTTEPLMFHCTRWEVD</sequence>
<reference key="1">
    <citation type="journal article" date="2009" name="Proc. Natl. Acad. Sci. U.S.A.">
        <title>Eukaryote-to-eukaryote gene transfer events revealed by the genome sequence of the wine yeast Saccharomyces cerevisiae EC1118.</title>
        <authorList>
            <person name="Novo M."/>
            <person name="Bigey F."/>
            <person name="Beyne E."/>
            <person name="Galeote V."/>
            <person name="Gavory F."/>
            <person name="Mallet S."/>
            <person name="Cambon B."/>
            <person name="Legras J.-L."/>
            <person name="Wincker P."/>
            <person name="Casaregola S."/>
            <person name="Dequin S."/>
        </authorList>
    </citation>
    <scope>NUCLEOTIDE SEQUENCE [LARGE SCALE GENOMIC DNA]</scope>
    <source>
        <strain>Lalvin EC1118 / Prise de mousse</strain>
    </source>
</reference>
<protein>
    <recommendedName>
        <fullName>Genetic interactor of prohibitin 5, mitochondrial</fullName>
    </recommendedName>
    <alternativeName>
        <fullName>Required for respiratory growth protein 5</fullName>
    </alternativeName>
</protein>
<gene>
    <name type="primary">GEP5</name>
    <name type="synonym">RRG5</name>
    <name type="ORF">EC1118_1L10_1695g</name>
</gene>
<organism>
    <name type="scientific">Saccharomyces cerevisiae (strain Lalvin EC1118 / Prise de mousse)</name>
    <name type="common">Baker's yeast</name>
    <dbReference type="NCBI Taxonomy" id="643680"/>
    <lineage>
        <taxon>Eukaryota</taxon>
        <taxon>Fungi</taxon>
        <taxon>Dikarya</taxon>
        <taxon>Ascomycota</taxon>
        <taxon>Saccharomycotina</taxon>
        <taxon>Saccharomycetes</taxon>
        <taxon>Saccharomycetales</taxon>
        <taxon>Saccharomycetaceae</taxon>
        <taxon>Saccharomyces</taxon>
    </lineage>
</organism>
<proteinExistence type="inferred from homology"/>